<comment type="function">
    <text evidence="1">Catalyzes the reversible cyclization of carbamoyl aspartate to dihydroorotate.</text>
</comment>
<comment type="catalytic activity">
    <reaction evidence="1">
        <text>(S)-dihydroorotate + H2O = N-carbamoyl-L-aspartate + H(+)</text>
        <dbReference type="Rhea" id="RHEA:24296"/>
        <dbReference type="ChEBI" id="CHEBI:15377"/>
        <dbReference type="ChEBI" id="CHEBI:15378"/>
        <dbReference type="ChEBI" id="CHEBI:30864"/>
        <dbReference type="ChEBI" id="CHEBI:32814"/>
        <dbReference type="EC" id="3.5.2.3"/>
    </reaction>
</comment>
<comment type="cofactor">
    <cofactor evidence="1">
        <name>Zn(2+)</name>
        <dbReference type="ChEBI" id="CHEBI:29105"/>
    </cofactor>
    <text evidence="1">Binds 2 Zn(2+) ions per subunit.</text>
</comment>
<comment type="pathway">
    <text evidence="1">Pyrimidine metabolism; UMP biosynthesis via de novo pathway; (S)-dihydroorotate from bicarbonate: step 3/3.</text>
</comment>
<comment type="similarity">
    <text evidence="1">Belongs to the metallo-dependent hydrolases superfamily. DHOase family. Class I DHOase subfamily.</text>
</comment>
<dbReference type="EC" id="3.5.2.3" evidence="1"/>
<dbReference type="EMBL" id="AE004092">
    <property type="protein sequence ID" value="AAK33823.1"/>
    <property type="molecule type" value="Genomic_DNA"/>
</dbReference>
<dbReference type="EMBL" id="CP000017">
    <property type="protein sequence ID" value="AAZ51327.1"/>
    <property type="molecule type" value="Genomic_DNA"/>
</dbReference>
<dbReference type="RefSeq" id="NP_269102.1">
    <property type="nucleotide sequence ID" value="NC_002737.2"/>
</dbReference>
<dbReference type="SMR" id="Q9A071"/>
<dbReference type="PaxDb" id="1314-HKU360_00719"/>
<dbReference type="KEGG" id="spy:SPy_0907"/>
<dbReference type="KEGG" id="spz:M5005_Spy0709"/>
<dbReference type="PATRIC" id="fig|160490.10.peg.779"/>
<dbReference type="HOGENOM" id="CLU_015572_1_0_9"/>
<dbReference type="OMA" id="SRLHVCH"/>
<dbReference type="UniPathway" id="UPA00070">
    <property type="reaction ID" value="UER00117"/>
</dbReference>
<dbReference type="Proteomes" id="UP000000750">
    <property type="component" value="Chromosome"/>
</dbReference>
<dbReference type="GO" id="GO:0005737">
    <property type="term" value="C:cytoplasm"/>
    <property type="evidence" value="ECO:0007669"/>
    <property type="project" value="TreeGrafter"/>
</dbReference>
<dbReference type="GO" id="GO:0004038">
    <property type="term" value="F:allantoinase activity"/>
    <property type="evidence" value="ECO:0007669"/>
    <property type="project" value="TreeGrafter"/>
</dbReference>
<dbReference type="GO" id="GO:0004151">
    <property type="term" value="F:dihydroorotase activity"/>
    <property type="evidence" value="ECO:0007669"/>
    <property type="project" value="UniProtKB-UniRule"/>
</dbReference>
<dbReference type="GO" id="GO:0008270">
    <property type="term" value="F:zinc ion binding"/>
    <property type="evidence" value="ECO:0007669"/>
    <property type="project" value="UniProtKB-UniRule"/>
</dbReference>
<dbReference type="GO" id="GO:0044205">
    <property type="term" value="P:'de novo' UMP biosynthetic process"/>
    <property type="evidence" value="ECO:0007669"/>
    <property type="project" value="UniProtKB-UniRule"/>
</dbReference>
<dbReference type="GO" id="GO:0006145">
    <property type="term" value="P:purine nucleobase catabolic process"/>
    <property type="evidence" value="ECO:0007669"/>
    <property type="project" value="TreeGrafter"/>
</dbReference>
<dbReference type="CDD" id="cd01317">
    <property type="entry name" value="DHOase_IIa"/>
    <property type="match status" value="1"/>
</dbReference>
<dbReference type="Gene3D" id="3.20.20.140">
    <property type="entry name" value="Metal-dependent hydrolases"/>
    <property type="match status" value="1"/>
</dbReference>
<dbReference type="HAMAP" id="MF_00220_B">
    <property type="entry name" value="PyrC_classI_B"/>
    <property type="match status" value="1"/>
</dbReference>
<dbReference type="InterPro" id="IPR006680">
    <property type="entry name" value="Amidohydro-rel"/>
</dbReference>
<dbReference type="InterPro" id="IPR004722">
    <property type="entry name" value="DHOase"/>
</dbReference>
<dbReference type="InterPro" id="IPR050138">
    <property type="entry name" value="DHOase/Allantoinase_Hydrolase"/>
</dbReference>
<dbReference type="InterPro" id="IPR002195">
    <property type="entry name" value="Dihydroorotase_CS"/>
</dbReference>
<dbReference type="InterPro" id="IPR011059">
    <property type="entry name" value="Metal-dep_hydrolase_composite"/>
</dbReference>
<dbReference type="InterPro" id="IPR032466">
    <property type="entry name" value="Metal_Hydrolase"/>
</dbReference>
<dbReference type="NCBIfam" id="NF006839">
    <property type="entry name" value="PRK09357.1-4"/>
    <property type="match status" value="1"/>
</dbReference>
<dbReference type="NCBIfam" id="TIGR00857">
    <property type="entry name" value="pyrC_multi"/>
    <property type="match status" value="1"/>
</dbReference>
<dbReference type="PANTHER" id="PTHR43668">
    <property type="entry name" value="ALLANTOINASE"/>
    <property type="match status" value="1"/>
</dbReference>
<dbReference type="PANTHER" id="PTHR43668:SF2">
    <property type="entry name" value="ALLANTOINASE"/>
    <property type="match status" value="1"/>
</dbReference>
<dbReference type="Pfam" id="PF01979">
    <property type="entry name" value="Amidohydro_1"/>
    <property type="match status" value="1"/>
</dbReference>
<dbReference type="SUPFAM" id="SSF51338">
    <property type="entry name" value="Composite domain of metallo-dependent hydrolases"/>
    <property type="match status" value="1"/>
</dbReference>
<dbReference type="SUPFAM" id="SSF51556">
    <property type="entry name" value="Metallo-dependent hydrolases"/>
    <property type="match status" value="1"/>
</dbReference>
<dbReference type="PROSITE" id="PS00482">
    <property type="entry name" value="DIHYDROOROTASE_1"/>
    <property type="match status" value="1"/>
</dbReference>
<dbReference type="PROSITE" id="PS00483">
    <property type="entry name" value="DIHYDROOROTASE_2"/>
    <property type="match status" value="1"/>
</dbReference>
<organism>
    <name type="scientific">Streptococcus pyogenes serotype M1</name>
    <dbReference type="NCBI Taxonomy" id="301447"/>
    <lineage>
        <taxon>Bacteria</taxon>
        <taxon>Bacillati</taxon>
        <taxon>Bacillota</taxon>
        <taxon>Bacilli</taxon>
        <taxon>Lactobacillales</taxon>
        <taxon>Streptococcaceae</taxon>
        <taxon>Streptococcus</taxon>
    </lineage>
</organism>
<feature type="chain" id="PRO_0000147257" description="Dihydroorotase">
    <location>
        <begin position="1"/>
        <end position="422"/>
    </location>
</feature>
<feature type="active site" evidence="1">
    <location>
        <position position="303"/>
    </location>
</feature>
<feature type="binding site" evidence="1">
    <location>
        <position position="59"/>
    </location>
    <ligand>
        <name>Zn(2+)</name>
        <dbReference type="ChEBI" id="CHEBI:29105"/>
        <label>1</label>
    </ligand>
</feature>
<feature type="binding site" evidence="1">
    <location>
        <begin position="61"/>
        <end position="63"/>
    </location>
    <ligand>
        <name>substrate</name>
    </ligand>
</feature>
<feature type="binding site" evidence="1">
    <location>
        <position position="61"/>
    </location>
    <ligand>
        <name>Zn(2+)</name>
        <dbReference type="ChEBI" id="CHEBI:29105"/>
        <label>1</label>
    </ligand>
</feature>
<feature type="binding site" evidence="1">
    <location>
        <position position="93"/>
    </location>
    <ligand>
        <name>substrate</name>
    </ligand>
</feature>
<feature type="binding site" evidence="1">
    <location>
        <position position="150"/>
    </location>
    <ligand>
        <name>Zn(2+)</name>
        <dbReference type="ChEBI" id="CHEBI:29105"/>
        <label>1</label>
    </ligand>
</feature>
<feature type="binding site" evidence="1">
    <location>
        <position position="150"/>
    </location>
    <ligand>
        <name>Zn(2+)</name>
        <dbReference type="ChEBI" id="CHEBI:29105"/>
        <label>2</label>
    </ligand>
</feature>
<feature type="binding site" evidence="1">
    <location>
        <position position="177"/>
    </location>
    <ligand>
        <name>Zn(2+)</name>
        <dbReference type="ChEBI" id="CHEBI:29105"/>
        <label>2</label>
    </ligand>
</feature>
<feature type="binding site" evidence="1">
    <location>
        <position position="230"/>
    </location>
    <ligand>
        <name>Zn(2+)</name>
        <dbReference type="ChEBI" id="CHEBI:29105"/>
        <label>2</label>
    </ligand>
</feature>
<feature type="binding site" evidence="1">
    <location>
        <position position="276"/>
    </location>
    <ligand>
        <name>substrate</name>
    </ligand>
</feature>
<feature type="binding site" evidence="1">
    <location>
        <position position="303"/>
    </location>
    <ligand>
        <name>Zn(2+)</name>
        <dbReference type="ChEBI" id="CHEBI:29105"/>
        <label>1</label>
    </ligand>
</feature>
<feature type="binding site" evidence="1">
    <location>
        <position position="307"/>
    </location>
    <ligand>
        <name>substrate</name>
    </ligand>
</feature>
<feature type="sequence conflict" description="In Ref. 2; AAZ51327." evidence="2" ref="2">
    <original>T</original>
    <variation>A</variation>
    <location>
        <position position="313"/>
    </location>
</feature>
<gene>
    <name evidence="1" type="primary">pyrC</name>
    <name type="ordered locus">SPy_0907</name>
    <name type="ordered locus">M5005_Spy0709</name>
</gene>
<name>PYRC_STRP1</name>
<evidence type="ECO:0000255" key="1">
    <source>
        <dbReference type="HAMAP-Rule" id="MF_00220"/>
    </source>
</evidence>
<evidence type="ECO:0000305" key="2"/>
<keyword id="KW-0378">Hydrolase</keyword>
<keyword id="KW-0479">Metal-binding</keyword>
<keyword id="KW-0665">Pyrimidine biosynthesis</keyword>
<keyword id="KW-1185">Reference proteome</keyword>
<keyword id="KW-0862">Zinc</keyword>
<accession>Q9A071</accession>
<accession>Q48Z91</accession>
<sequence length="422" mass="45291">MILIKNGRVMDPKSQRDQVADVLIDGKQIVKIASAIECQEAQVIDASGLIVAPGLVDIHVHFREPGQTHKEDIHTGALAAAAGGVTTVVMMANTNPVISDVETLQEVLASAAKEKIHIYTNASVTQAFNGKDVTDFKALLEAGAVSFSDDGIPLESSKVLKEAFDLANANQTFISLHEEDPQLNGVLGFNEGIAEEHFHFCGATGVAEYSMIARDVMIAYDRQAHVHIQHLSKAESVQVVAFAQQLGAKVTAEVSPQHFSTTEDLLLIAGTSAKMNPPLRTQRDRLAVIEGLKSGVITVIATDHAPHHKDEKTVDDMTKAPSGMTGLETSLSLGLTHLVEPGHLTLMSLLEKMTLNPALLYGFDAGYLAENGPADLVIFADKQERLITENFASKASNSPFIGNKLKGVVKYTIADGEVVYPN</sequence>
<protein>
    <recommendedName>
        <fullName evidence="1">Dihydroorotase</fullName>
        <shortName evidence="1">DHOase</shortName>
        <ecNumber evidence="1">3.5.2.3</ecNumber>
    </recommendedName>
</protein>
<proteinExistence type="inferred from homology"/>
<reference key="1">
    <citation type="journal article" date="2001" name="Proc. Natl. Acad. Sci. U.S.A.">
        <title>Complete genome sequence of an M1 strain of Streptococcus pyogenes.</title>
        <authorList>
            <person name="Ferretti J.J."/>
            <person name="McShan W.M."/>
            <person name="Ajdic D.J."/>
            <person name="Savic D.J."/>
            <person name="Savic G."/>
            <person name="Lyon K."/>
            <person name="Primeaux C."/>
            <person name="Sezate S."/>
            <person name="Suvorov A.N."/>
            <person name="Kenton S."/>
            <person name="Lai H.S."/>
            <person name="Lin S.P."/>
            <person name="Qian Y."/>
            <person name="Jia H.G."/>
            <person name="Najar F.Z."/>
            <person name="Ren Q."/>
            <person name="Zhu H."/>
            <person name="Song L."/>
            <person name="White J."/>
            <person name="Yuan X."/>
            <person name="Clifton S.W."/>
            <person name="Roe B.A."/>
            <person name="McLaughlin R.E."/>
        </authorList>
    </citation>
    <scope>NUCLEOTIDE SEQUENCE [LARGE SCALE GENOMIC DNA]</scope>
    <source>
        <strain>ATCC 700294 / SF370 / Serotype M1</strain>
    </source>
</reference>
<reference key="2">
    <citation type="journal article" date="2005" name="J. Infect. Dis.">
        <title>Evolutionary origin and emergence of a highly successful clone of serotype M1 group A Streptococcus involved multiple horizontal gene transfer events.</title>
        <authorList>
            <person name="Sumby P."/>
            <person name="Porcella S.F."/>
            <person name="Madrigal A.G."/>
            <person name="Barbian K.D."/>
            <person name="Virtaneva K."/>
            <person name="Ricklefs S.M."/>
            <person name="Sturdevant D.E."/>
            <person name="Graham M.R."/>
            <person name="Vuopio-Varkila J."/>
            <person name="Hoe N.P."/>
            <person name="Musser J.M."/>
        </authorList>
    </citation>
    <scope>NUCLEOTIDE SEQUENCE [LARGE SCALE GENOMIC DNA]</scope>
    <source>
        <strain>ATCC BAA-947 / MGAS5005 / Serotype M1</strain>
    </source>
</reference>